<evidence type="ECO:0000250" key="1"/>
<evidence type="ECO:0000255" key="2"/>
<evidence type="ECO:0000255" key="3">
    <source>
        <dbReference type="PROSITE-ProRule" id="PRU10075"/>
    </source>
</evidence>
<evidence type="ECO:0000269" key="4">
    <source>
    </source>
</evidence>
<evidence type="ECO:0000305" key="5"/>
<reference key="1">
    <citation type="journal article" date="2000" name="Nature">
        <title>Sequence and analysis of chromosome 3 of the plant Arabidopsis thaliana.</title>
        <authorList>
            <person name="Salanoubat M."/>
            <person name="Lemcke K."/>
            <person name="Rieger M."/>
            <person name="Ansorge W."/>
            <person name="Unseld M."/>
            <person name="Fartmann B."/>
            <person name="Valle G."/>
            <person name="Bloecker H."/>
            <person name="Perez-Alonso M."/>
            <person name="Obermaier B."/>
            <person name="Delseny M."/>
            <person name="Boutry M."/>
            <person name="Grivell L.A."/>
            <person name="Mache R."/>
            <person name="Puigdomenech P."/>
            <person name="De Simone V."/>
            <person name="Choisne N."/>
            <person name="Artiguenave F."/>
            <person name="Robert C."/>
            <person name="Brottier P."/>
            <person name="Wincker P."/>
            <person name="Cattolico L."/>
            <person name="Weissenbach J."/>
            <person name="Saurin W."/>
            <person name="Quetier F."/>
            <person name="Schaefer M."/>
            <person name="Mueller-Auer S."/>
            <person name="Gabel C."/>
            <person name="Fuchs M."/>
            <person name="Benes V."/>
            <person name="Wurmbach E."/>
            <person name="Drzonek H."/>
            <person name="Erfle H."/>
            <person name="Jordan N."/>
            <person name="Bangert S."/>
            <person name="Wiedelmann R."/>
            <person name="Kranz H."/>
            <person name="Voss H."/>
            <person name="Holland R."/>
            <person name="Brandt P."/>
            <person name="Nyakatura G."/>
            <person name="Vezzi A."/>
            <person name="D'Angelo M."/>
            <person name="Pallavicini A."/>
            <person name="Toppo S."/>
            <person name="Simionati B."/>
            <person name="Conrad A."/>
            <person name="Hornischer K."/>
            <person name="Kauer G."/>
            <person name="Loehnert T.-H."/>
            <person name="Nordsiek G."/>
            <person name="Reichelt J."/>
            <person name="Scharfe M."/>
            <person name="Schoen O."/>
            <person name="Bargues M."/>
            <person name="Terol J."/>
            <person name="Climent J."/>
            <person name="Navarro P."/>
            <person name="Collado C."/>
            <person name="Perez-Perez A."/>
            <person name="Ottenwaelder B."/>
            <person name="Duchemin D."/>
            <person name="Cooke R."/>
            <person name="Laudie M."/>
            <person name="Berger-Llauro C."/>
            <person name="Purnelle B."/>
            <person name="Masuy D."/>
            <person name="de Haan M."/>
            <person name="Maarse A.C."/>
            <person name="Alcaraz J.-P."/>
            <person name="Cottet A."/>
            <person name="Casacuberta E."/>
            <person name="Monfort A."/>
            <person name="Argiriou A."/>
            <person name="Flores M."/>
            <person name="Liguori R."/>
            <person name="Vitale D."/>
            <person name="Mannhaupt G."/>
            <person name="Haase D."/>
            <person name="Schoof H."/>
            <person name="Rudd S."/>
            <person name="Zaccaria P."/>
            <person name="Mewes H.-W."/>
            <person name="Mayer K.F.X."/>
            <person name="Kaul S."/>
            <person name="Town C.D."/>
            <person name="Koo H.L."/>
            <person name="Tallon L.J."/>
            <person name="Jenkins J."/>
            <person name="Rooney T."/>
            <person name="Rizzo M."/>
            <person name="Walts A."/>
            <person name="Utterback T."/>
            <person name="Fujii C.Y."/>
            <person name="Shea T.P."/>
            <person name="Creasy T.H."/>
            <person name="Haas B."/>
            <person name="Maiti R."/>
            <person name="Wu D."/>
            <person name="Peterson J."/>
            <person name="Van Aken S."/>
            <person name="Pai G."/>
            <person name="Militscher J."/>
            <person name="Sellers P."/>
            <person name="Gill J.E."/>
            <person name="Feldblyum T.V."/>
            <person name="Preuss D."/>
            <person name="Lin X."/>
            <person name="Nierman W.C."/>
            <person name="Salzberg S.L."/>
            <person name="White O."/>
            <person name="Venter J.C."/>
            <person name="Fraser C.M."/>
            <person name="Kaneko T."/>
            <person name="Nakamura Y."/>
            <person name="Sato S."/>
            <person name="Kato T."/>
            <person name="Asamizu E."/>
            <person name="Sasamoto S."/>
            <person name="Kimura T."/>
            <person name="Idesawa K."/>
            <person name="Kawashima K."/>
            <person name="Kishida Y."/>
            <person name="Kiyokawa C."/>
            <person name="Kohara M."/>
            <person name="Matsumoto M."/>
            <person name="Matsuno A."/>
            <person name="Muraki A."/>
            <person name="Nakayama S."/>
            <person name="Nakazaki N."/>
            <person name="Shinpo S."/>
            <person name="Takeuchi C."/>
            <person name="Wada T."/>
            <person name="Watanabe A."/>
            <person name="Yamada M."/>
            <person name="Yasuda M."/>
            <person name="Tabata S."/>
        </authorList>
    </citation>
    <scope>NUCLEOTIDE SEQUENCE [LARGE SCALE GENOMIC DNA]</scope>
    <source>
        <strain>cv. Columbia</strain>
    </source>
</reference>
<reference key="2">
    <citation type="journal article" date="2017" name="Plant J.">
        <title>Araport11: a complete reannotation of the Arabidopsis thaliana reference genome.</title>
        <authorList>
            <person name="Cheng C.Y."/>
            <person name="Krishnakumar V."/>
            <person name="Chan A.P."/>
            <person name="Thibaud-Nissen F."/>
            <person name="Schobel S."/>
            <person name="Town C.D."/>
        </authorList>
    </citation>
    <scope>GENOME REANNOTATION</scope>
    <source>
        <strain>cv. Columbia</strain>
    </source>
</reference>
<reference key="3">
    <citation type="journal article" date="2003" name="Science">
        <title>Empirical analysis of transcriptional activity in the Arabidopsis genome.</title>
        <authorList>
            <person name="Yamada K."/>
            <person name="Lim J."/>
            <person name="Dale J.M."/>
            <person name="Chen H."/>
            <person name="Shinn P."/>
            <person name="Palm C.J."/>
            <person name="Southwick A.M."/>
            <person name="Wu H.C."/>
            <person name="Kim C.J."/>
            <person name="Nguyen M."/>
            <person name="Pham P.K."/>
            <person name="Cheuk R.F."/>
            <person name="Karlin-Newmann G."/>
            <person name="Liu S.X."/>
            <person name="Lam B."/>
            <person name="Sakano H."/>
            <person name="Wu T."/>
            <person name="Yu G."/>
            <person name="Miranda M."/>
            <person name="Quach H.L."/>
            <person name="Tripp M."/>
            <person name="Chang C.H."/>
            <person name="Lee J.M."/>
            <person name="Toriumi M.J."/>
            <person name="Chan M.M."/>
            <person name="Tang C.C."/>
            <person name="Onodera C.S."/>
            <person name="Deng J.M."/>
            <person name="Akiyama K."/>
            <person name="Ansari Y."/>
            <person name="Arakawa T."/>
            <person name="Banh J."/>
            <person name="Banno F."/>
            <person name="Bowser L."/>
            <person name="Brooks S.Y."/>
            <person name="Carninci P."/>
            <person name="Chao Q."/>
            <person name="Choy N."/>
            <person name="Enju A."/>
            <person name="Goldsmith A.D."/>
            <person name="Gurjal M."/>
            <person name="Hansen N.F."/>
            <person name="Hayashizaki Y."/>
            <person name="Johnson-Hopson C."/>
            <person name="Hsuan V.W."/>
            <person name="Iida K."/>
            <person name="Karnes M."/>
            <person name="Khan S."/>
            <person name="Koesema E."/>
            <person name="Ishida J."/>
            <person name="Jiang P.X."/>
            <person name="Jones T."/>
            <person name="Kawai J."/>
            <person name="Kamiya A."/>
            <person name="Meyers C."/>
            <person name="Nakajima M."/>
            <person name="Narusaka M."/>
            <person name="Seki M."/>
            <person name="Sakurai T."/>
            <person name="Satou M."/>
            <person name="Tamse R."/>
            <person name="Vaysberg M."/>
            <person name="Wallender E.K."/>
            <person name="Wong C."/>
            <person name="Yamamura Y."/>
            <person name="Yuan S."/>
            <person name="Shinozaki K."/>
            <person name="Davis R.W."/>
            <person name="Theologis A."/>
            <person name="Ecker J.R."/>
        </authorList>
    </citation>
    <scope>NUCLEOTIDE SEQUENCE [LARGE SCALE MRNA] OF 41-487</scope>
    <source>
        <strain>cv. Columbia</strain>
    </source>
</reference>
<reference key="4">
    <citation type="journal article" date="2005" name="Plant Physiol.">
        <title>An expression and bioinformatics analysis of the Arabidopsis serine carboxypeptidase-like gene family.</title>
        <authorList>
            <person name="Fraser C.M."/>
            <person name="Rider L.W."/>
            <person name="Chapple C."/>
        </authorList>
    </citation>
    <scope>GENE FAMILY</scope>
    <scope>TISSUE SPECIFICITY</scope>
    <scope>NOMENCLATURE</scope>
</reference>
<dbReference type="EC" id="3.4.16.-"/>
<dbReference type="EMBL" id="AL049711">
    <property type="protein sequence ID" value="CAB41321.1"/>
    <property type="molecule type" value="Genomic_DNA"/>
</dbReference>
<dbReference type="EMBL" id="CP002686">
    <property type="protein sequence ID" value="AEE78874.1"/>
    <property type="molecule type" value="Genomic_DNA"/>
</dbReference>
<dbReference type="EMBL" id="BT003902">
    <property type="protein sequence ID" value="AAO41950.1"/>
    <property type="molecule type" value="mRNA"/>
</dbReference>
<dbReference type="PIR" id="T49080">
    <property type="entry name" value="T49080"/>
</dbReference>
<dbReference type="RefSeq" id="NP_190769.1">
    <property type="nucleotide sequence ID" value="NM_115060.3"/>
</dbReference>
<dbReference type="SMR" id="Q84WF0"/>
<dbReference type="ESTHER" id="arath-SCP37">
    <property type="family name" value="Carboxypeptidase_S10"/>
</dbReference>
<dbReference type="MEROPS" id="S10.A31"/>
<dbReference type="GlyCosmos" id="Q84WF0">
    <property type="glycosylation" value="6 sites, No reported glycans"/>
</dbReference>
<dbReference type="GlyGen" id="Q84WF0">
    <property type="glycosylation" value="6 sites"/>
</dbReference>
<dbReference type="PaxDb" id="3702-AT3G52010.1"/>
<dbReference type="ProteomicsDB" id="232770"/>
<dbReference type="EnsemblPlants" id="AT3G52010.1">
    <property type="protein sequence ID" value="AT3G52010.1"/>
    <property type="gene ID" value="AT3G52010"/>
</dbReference>
<dbReference type="GeneID" id="824364"/>
<dbReference type="Gramene" id="AT3G52010.1">
    <property type="protein sequence ID" value="AT3G52010.1"/>
    <property type="gene ID" value="AT3G52010"/>
</dbReference>
<dbReference type="KEGG" id="ath:AT3G52010"/>
<dbReference type="Araport" id="AT3G52010"/>
<dbReference type="TAIR" id="AT3G52010">
    <property type="gene designation" value="SCPL37"/>
</dbReference>
<dbReference type="eggNOG" id="KOG1282">
    <property type="taxonomic scope" value="Eukaryota"/>
</dbReference>
<dbReference type="HOGENOM" id="CLU_008523_13_2_1"/>
<dbReference type="InParanoid" id="Q84WF0"/>
<dbReference type="OMA" id="EVWAKIL"/>
<dbReference type="PhylomeDB" id="Q84WF0"/>
<dbReference type="PRO" id="PR:Q84WF0"/>
<dbReference type="Proteomes" id="UP000006548">
    <property type="component" value="Chromosome 3"/>
</dbReference>
<dbReference type="ExpressionAtlas" id="Q84WF0">
    <property type="expression patterns" value="baseline and differential"/>
</dbReference>
<dbReference type="GO" id="GO:0005576">
    <property type="term" value="C:extracellular region"/>
    <property type="evidence" value="ECO:0007669"/>
    <property type="project" value="UniProtKB-SubCell"/>
</dbReference>
<dbReference type="GO" id="GO:0004185">
    <property type="term" value="F:serine-type carboxypeptidase activity"/>
    <property type="evidence" value="ECO:0007669"/>
    <property type="project" value="InterPro"/>
</dbReference>
<dbReference type="GO" id="GO:0006508">
    <property type="term" value="P:proteolysis"/>
    <property type="evidence" value="ECO:0007669"/>
    <property type="project" value="UniProtKB-KW"/>
</dbReference>
<dbReference type="FunFam" id="3.40.50.11320:FF:000002">
    <property type="entry name" value="Carboxypeptidase"/>
    <property type="match status" value="1"/>
</dbReference>
<dbReference type="FunFam" id="3.40.50.1820:FF:000211">
    <property type="entry name" value="Carboxypeptidase"/>
    <property type="match status" value="1"/>
</dbReference>
<dbReference type="Gene3D" id="3.40.50.11320">
    <property type="match status" value="1"/>
</dbReference>
<dbReference type="Gene3D" id="6.10.250.940">
    <property type="match status" value="1"/>
</dbReference>
<dbReference type="Gene3D" id="3.40.50.1820">
    <property type="entry name" value="alpha/beta hydrolase"/>
    <property type="match status" value="1"/>
</dbReference>
<dbReference type="InterPro" id="IPR029058">
    <property type="entry name" value="AB_hydrolase_fold"/>
</dbReference>
<dbReference type="InterPro" id="IPR001563">
    <property type="entry name" value="Peptidase_S10"/>
</dbReference>
<dbReference type="InterPro" id="IPR033124">
    <property type="entry name" value="Ser_caboxypep_his_AS"/>
</dbReference>
<dbReference type="PANTHER" id="PTHR11802:SF132">
    <property type="entry name" value="SERINE CARBOXYPEPTIDASE-LIKE 36-RELATED"/>
    <property type="match status" value="1"/>
</dbReference>
<dbReference type="PANTHER" id="PTHR11802">
    <property type="entry name" value="SERINE PROTEASE FAMILY S10 SERINE CARBOXYPEPTIDASE"/>
    <property type="match status" value="1"/>
</dbReference>
<dbReference type="Pfam" id="PF00450">
    <property type="entry name" value="Peptidase_S10"/>
    <property type="match status" value="1"/>
</dbReference>
<dbReference type="PRINTS" id="PR00724">
    <property type="entry name" value="CRBOXYPTASEC"/>
</dbReference>
<dbReference type="SUPFAM" id="SSF53474">
    <property type="entry name" value="alpha/beta-Hydrolases"/>
    <property type="match status" value="1"/>
</dbReference>
<dbReference type="PROSITE" id="PS00560">
    <property type="entry name" value="CARBOXYPEPT_SER_HIS"/>
    <property type="match status" value="1"/>
</dbReference>
<gene>
    <name type="primary">SCPL37</name>
    <name type="ordered locus">At3g52010</name>
    <name type="ORF">F4F15.120</name>
</gene>
<protein>
    <recommendedName>
        <fullName>Serine carboxypeptidase-like 37</fullName>
        <ecNumber>3.4.16.-</ecNumber>
    </recommendedName>
</protein>
<comment type="function">
    <text evidence="1">Probable carboxypeptidase.</text>
</comment>
<comment type="subcellular location">
    <subcellularLocation>
        <location evidence="5">Secreted</location>
    </subcellularLocation>
</comment>
<comment type="tissue specificity">
    <text evidence="4">Expressed in seedlings, roots, leaves, stems, flowers and siliques.</text>
</comment>
<comment type="similarity">
    <text evidence="5">Belongs to the peptidase S10 family.</text>
</comment>
<name>SCP37_ARATH</name>
<proteinExistence type="evidence at transcript level"/>
<organism>
    <name type="scientific">Arabidopsis thaliana</name>
    <name type="common">Mouse-ear cress</name>
    <dbReference type="NCBI Taxonomy" id="3702"/>
    <lineage>
        <taxon>Eukaryota</taxon>
        <taxon>Viridiplantae</taxon>
        <taxon>Streptophyta</taxon>
        <taxon>Embryophyta</taxon>
        <taxon>Tracheophyta</taxon>
        <taxon>Spermatophyta</taxon>
        <taxon>Magnoliopsida</taxon>
        <taxon>eudicotyledons</taxon>
        <taxon>Gunneridae</taxon>
        <taxon>Pentapetalae</taxon>
        <taxon>rosids</taxon>
        <taxon>malvids</taxon>
        <taxon>Brassicales</taxon>
        <taxon>Brassicaceae</taxon>
        <taxon>Camelineae</taxon>
        <taxon>Arabidopsis</taxon>
    </lineage>
</organism>
<accession>Q84WF0</accession>
<accession>Q9SV03</accession>
<sequence length="487" mass="54915">MVKQQDWSVTTCVLLFLFLASQIHCRSGIHVSKRLEGSKQGDGKSGDTSFNVLRRVLSPKEKDLIKKLPGQPSGVSFRQYGGYVPVNEPSSRFLYYYFVEAIKPNTSTPLVIWFNGGPACSSLGGAFLELGPFRVHSGGRKLFRNPYSWNNEANVLFLESPVTTGFSYSSNPIDLEELGEKGDKATAEDNYIFLMNWLERFPEYKGRDIYIAGQSYAGHYVPQLAQIIIHRNKKTLVNLRGILIGNPSLLTSIQDPYGYEFMLSHGLMSQQQMDNYNQFCLRDDLYDNDKCALSVKTIDDAKKHLDTYNIYAPVCLNSTLSRISKKCTTVLEVDPCSKDYLKAYLNRKKVQKAIHANTTKLPYEWTSCNNELTENWSENDRDTPMIPILHELMGEGVRVMIYNGDVDLEIPFASTLAVVKEMNLTVVKEFRPWFTGGQLGGFTEDYKGNLTFVTVKGAGHSVPTDQPIHALNIFTSFIRNTPLPHTA</sequence>
<feature type="signal peptide" evidence="2">
    <location>
        <begin position="1"/>
        <end position="28"/>
    </location>
</feature>
<feature type="chain" id="PRO_0000274652" description="Serine carboxypeptidase-like 37">
    <location>
        <begin position="29"/>
        <end position="487"/>
    </location>
</feature>
<feature type="active site" evidence="3">
    <location>
        <position position="215"/>
    </location>
</feature>
<feature type="active site" evidence="3">
    <location>
        <position position="407"/>
    </location>
</feature>
<feature type="active site" evidence="3">
    <location>
        <position position="460"/>
    </location>
</feature>
<feature type="glycosylation site" description="N-linked (GlcNAc...) asparagine" evidence="2">
    <location>
        <position position="105"/>
    </location>
</feature>
<feature type="glycosylation site" description="N-linked (GlcNAc...) asparagine" evidence="2">
    <location>
        <position position="317"/>
    </location>
</feature>
<feature type="glycosylation site" description="N-linked (GlcNAc...) asparagine" evidence="2">
    <location>
        <position position="357"/>
    </location>
</feature>
<feature type="glycosylation site" description="N-linked (GlcNAc...) asparagine" evidence="2">
    <location>
        <position position="375"/>
    </location>
</feature>
<feature type="glycosylation site" description="N-linked (GlcNAc...) asparagine" evidence="2">
    <location>
        <position position="423"/>
    </location>
</feature>
<feature type="glycosylation site" description="N-linked (GlcNAc...) asparagine" evidence="2">
    <location>
        <position position="449"/>
    </location>
</feature>
<feature type="disulfide bond" evidence="1">
    <location>
        <begin position="120"/>
        <end position="368"/>
    </location>
</feature>
<feature type="disulfide bond" evidence="1">
    <location>
        <begin position="280"/>
        <end position="291"/>
    </location>
</feature>
<feature type="disulfide bond" evidence="1">
    <location>
        <begin position="315"/>
        <end position="336"/>
    </location>
</feature>
<keyword id="KW-0121">Carboxypeptidase</keyword>
<keyword id="KW-1015">Disulfide bond</keyword>
<keyword id="KW-0325">Glycoprotein</keyword>
<keyword id="KW-0378">Hydrolase</keyword>
<keyword id="KW-0645">Protease</keyword>
<keyword id="KW-1185">Reference proteome</keyword>
<keyword id="KW-0964">Secreted</keyword>
<keyword id="KW-0732">Signal</keyword>